<accession>Q11095</accession>
<keyword id="KW-1003">Cell membrane</keyword>
<keyword id="KW-0297">G-protein coupled receptor</keyword>
<keyword id="KW-0472">Membrane</keyword>
<keyword id="KW-0675">Receptor</keyword>
<keyword id="KW-1185">Reference proteome</keyword>
<keyword id="KW-0807">Transducer</keyword>
<keyword id="KW-0812">Transmembrane</keyword>
<keyword id="KW-1133">Transmembrane helix</keyword>
<gene>
    <name evidence="4" type="primary">frpr-1</name>
    <name evidence="4" type="ORF">C02B8.5</name>
</gene>
<protein>
    <recommendedName>
        <fullName evidence="3">Probable G-protein coupled receptor frpr-1</fullName>
    </recommendedName>
</protein>
<name>FRPR1_CAEEL</name>
<dbReference type="EMBL" id="FO080272">
    <property type="protein sequence ID" value="CCD62509.2"/>
    <property type="molecule type" value="Genomic_DNA"/>
</dbReference>
<dbReference type="PIR" id="T15374">
    <property type="entry name" value="T15374"/>
</dbReference>
<dbReference type="RefSeq" id="NP_509368.3">
    <property type="nucleotide sequence ID" value="NM_076967.5"/>
</dbReference>
<dbReference type="FunCoup" id="Q11095">
    <property type="interactions" value="2"/>
</dbReference>
<dbReference type="STRING" id="6239.C02B8.5.1"/>
<dbReference type="PaxDb" id="6239-C02B8.5"/>
<dbReference type="EnsemblMetazoa" id="C02B8.5.1">
    <property type="protein sequence ID" value="C02B8.5.1"/>
    <property type="gene ID" value="WBGene00015323"/>
</dbReference>
<dbReference type="GeneID" id="182105"/>
<dbReference type="KEGG" id="cel:CELE_C02B8.5"/>
<dbReference type="UCSC" id="C02B8.5">
    <property type="organism name" value="c. elegans"/>
</dbReference>
<dbReference type="AGR" id="WB:WBGene00015323"/>
<dbReference type="CTD" id="182105"/>
<dbReference type="WormBase" id="C02B8.5">
    <property type="protein sequence ID" value="CE47103"/>
    <property type="gene ID" value="WBGene00015323"/>
    <property type="gene designation" value="frpr-1"/>
</dbReference>
<dbReference type="eggNOG" id="ENOG502SIUQ">
    <property type="taxonomic scope" value="Eukaryota"/>
</dbReference>
<dbReference type="GeneTree" id="ENSGT00940000173102"/>
<dbReference type="HOGENOM" id="CLU_009579_24_7_1"/>
<dbReference type="InParanoid" id="Q11095"/>
<dbReference type="OMA" id="ASKFFAM"/>
<dbReference type="OrthoDB" id="10011262at2759"/>
<dbReference type="PhylomeDB" id="Q11095"/>
<dbReference type="PRO" id="PR:Q11095"/>
<dbReference type="Proteomes" id="UP000001940">
    <property type="component" value="Chromosome X"/>
</dbReference>
<dbReference type="Bgee" id="WBGene00015323">
    <property type="expression patterns" value="Expressed in larva and 1 other cell type or tissue"/>
</dbReference>
<dbReference type="GO" id="GO:0005886">
    <property type="term" value="C:plasma membrane"/>
    <property type="evidence" value="ECO:0007669"/>
    <property type="project" value="UniProtKB-SubCell"/>
</dbReference>
<dbReference type="GO" id="GO:0004930">
    <property type="term" value="F:G protein-coupled receptor activity"/>
    <property type="evidence" value="ECO:0007669"/>
    <property type="project" value="UniProtKB-KW"/>
</dbReference>
<dbReference type="CDD" id="cd14978">
    <property type="entry name" value="7tmA_FMRFamide_R-like"/>
    <property type="match status" value="1"/>
</dbReference>
<dbReference type="Gene3D" id="1.20.1070.10">
    <property type="entry name" value="Rhodopsin 7-helix transmembrane proteins"/>
    <property type="match status" value="1"/>
</dbReference>
<dbReference type="InterPro" id="IPR053326">
    <property type="entry name" value="GPCR1-like"/>
</dbReference>
<dbReference type="InterPro" id="IPR000276">
    <property type="entry name" value="GPCR_Rhodpsn"/>
</dbReference>
<dbReference type="InterPro" id="IPR017452">
    <property type="entry name" value="GPCR_Rhodpsn_7TM"/>
</dbReference>
<dbReference type="PANTHER" id="PTHR47632">
    <property type="entry name" value="FMRFAMIDE PEPTIDE RECEPTOR FAMILY-RELATED"/>
    <property type="match status" value="1"/>
</dbReference>
<dbReference type="PANTHER" id="PTHR47632:SF2">
    <property type="entry name" value="G-PROTEIN COUPLED RECEPTOR FRPR-1-RELATED"/>
    <property type="match status" value="1"/>
</dbReference>
<dbReference type="PRINTS" id="PR00237">
    <property type="entry name" value="GPCRRHODOPSN"/>
</dbReference>
<dbReference type="SUPFAM" id="SSF81321">
    <property type="entry name" value="Family A G protein-coupled receptor-like"/>
    <property type="match status" value="1"/>
</dbReference>
<dbReference type="PROSITE" id="PS50262">
    <property type="entry name" value="G_PROTEIN_RECEP_F1_2"/>
    <property type="match status" value="1"/>
</dbReference>
<organism>
    <name type="scientific">Caenorhabditis elegans</name>
    <dbReference type="NCBI Taxonomy" id="6239"/>
    <lineage>
        <taxon>Eukaryota</taxon>
        <taxon>Metazoa</taxon>
        <taxon>Ecdysozoa</taxon>
        <taxon>Nematoda</taxon>
        <taxon>Chromadorea</taxon>
        <taxon>Rhabditida</taxon>
        <taxon>Rhabditina</taxon>
        <taxon>Rhabditomorpha</taxon>
        <taxon>Rhabditoidea</taxon>
        <taxon>Rhabditidae</taxon>
        <taxon>Peloderinae</taxon>
        <taxon>Caenorhabditis</taxon>
    </lineage>
</organism>
<proteinExistence type="inferred from homology"/>
<feature type="chain" id="PRO_0000065102" description="Probable G-protein coupled receptor frpr-1" evidence="3">
    <location>
        <begin position="1"/>
        <end position="378"/>
    </location>
</feature>
<feature type="transmembrane region" description="Helical" evidence="1">
    <location>
        <begin position="47"/>
        <end position="67"/>
    </location>
</feature>
<feature type="transmembrane region" description="Helical" evidence="1">
    <location>
        <begin position="85"/>
        <end position="105"/>
    </location>
</feature>
<feature type="transmembrane region" description="Helical" evidence="1">
    <location>
        <begin position="120"/>
        <end position="140"/>
    </location>
</feature>
<feature type="transmembrane region" description="Helical" evidence="1">
    <location>
        <begin position="180"/>
        <end position="200"/>
    </location>
</feature>
<feature type="transmembrane region" description="Helical" evidence="1">
    <location>
        <begin position="243"/>
        <end position="263"/>
    </location>
</feature>
<feature type="transmembrane region" description="Helical" evidence="1">
    <location>
        <begin position="277"/>
        <end position="297"/>
    </location>
</feature>
<feature type="transmembrane region" description="Helical" evidence="1">
    <location>
        <begin position="315"/>
        <end position="337"/>
    </location>
</feature>
<evidence type="ECO:0000255" key="1"/>
<evidence type="ECO:0000255" key="2">
    <source>
        <dbReference type="PROSITE-ProRule" id="PRU00521"/>
    </source>
</evidence>
<evidence type="ECO:0000305" key="3"/>
<evidence type="ECO:0000312" key="4">
    <source>
        <dbReference type="WormBase" id="C02B8.5"/>
    </source>
</evidence>
<reference key="1">
    <citation type="journal article" date="1998" name="Science">
        <title>Genome sequence of the nematode C. elegans: a platform for investigating biology.</title>
        <authorList>
            <consortium name="The C. elegans sequencing consortium"/>
        </authorList>
    </citation>
    <scope>NUCLEOTIDE SEQUENCE [LARGE SCALE GENOMIC DNA]</scope>
    <source>
        <strain>Bristol N2</strain>
    </source>
</reference>
<comment type="subcellular location">
    <subcellularLocation>
        <location evidence="3">Cell membrane</location>
        <topology evidence="3">Multi-pass membrane protein</topology>
    </subcellularLocation>
</comment>
<comment type="similarity">
    <text evidence="2">Belongs to the G-protein coupled receptor 1 family.</text>
</comment>
<sequence>MEGLNMSLECTPASRSNGTCYGLAVCGYCYDFVETRQVVKEYEQFNLVVIGLMLPLIGCLGLIGNALSAFTYSRREMISSLNVYLFALACSDIVIILTAFFLFFLENMRKRSEWATYYFAVLSPVMFPLGLTAQTMSVFITVASAFDCLVLVAASEKFKSKFCSVNTSILVGNFNDFKNVIVCLKIIVKIFLLGIFYNSPHMYEIYVIDCWSTMYNTASKDVCPTALRSNVDYVRIYYVYMYTIVMAVGPVLLLIVINTAIVISMRRSSSPNSESDIITLVLVVCLFISCNVLPLTVNFLELLFGIINSYLIDLSNLMVVVNSSCNFLIYYTFGSNFRRTLRYYVRAALNRRAPAQNAANNRTPPRVKLCLPPTEVLI</sequence>